<protein>
    <recommendedName>
        <fullName evidence="1">Phosphoribosyl-AMP cyclohydrolase</fullName>
        <shortName evidence="1">PRA-CH</shortName>
        <ecNumber evidence="1">3.5.4.19</ecNumber>
    </recommendedName>
</protein>
<organism>
    <name type="scientific">Haloarcula marismortui (strain ATCC 43049 / DSM 3752 / JCM 8966 / VKM B-1809)</name>
    <name type="common">Halobacterium marismortui</name>
    <dbReference type="NCBI Taxonomy" id="272569"/>
    <lineage>
        <taxon>Archaea</taxon>
        <taxon>Methanobacteriati</taxon>
        <taxon>Methanobacteriota</taxon>
        <taxon>Stenosarchaea group</taxon>
        <taxon>Halobacteria</taxon>
        <taxon>Halobacteriales</taxon>
        <taxon>Haloarculaceae</taxon>
        <taxon>Haloarcula</taxon>
    </lineage>
</organism>
<comment type="function">
    <text evidence="1">Catalyzes the hydrolysis of the adenine ring of phosphoribosyl-AMP.</text>
</comment>
<comment type="catalytic activity">
    <reaction evidence="1">
        <text>1-(5-phospho-beta-D-ribosyl)-5'-AMP + H2O = 1-(5-phospho-beta-D-ribosyl)-5-[(5-phospho-beta-D-ribosylamino)methylideneamino]imidazole-4-carboxamide</text>
        <dbReference type="Rhea" id="RHEA:20049"/>
        <dbReference type="ChEBI" id="CHEBI:15377"/>
        <dbReference type="ChEBI" id="CHEBI:58435"/>
        <dbReference type="ChEBI" id="CHEBI:59457"/>
        <dbReference type="EC" id="3.5.4.19"/>
    </reaction>
</comment>
<comment type="cofactor">
    <cofactor evidence="1">
        <name>Mg(2+)</name>
        <dbReference type="ChEBI" id="CHEBI:18420"/>
    </cofactor>
    <text evidence="1">Binds 1 Mg(2+) ion per subunit.</text>
</comment>
<comment type="cofactor">
    <cofactor evidence="1">
        <name>Zn(2+)</name>
        <dbReference type="ChEBI" id="CHEBI:29105"/>
    </cofactor>
    <text evidence="1">Binds 1 zinc ion per subunit.</text>
</comment>
<comment type="pathway">
    <text evidence="1">Amino-acid biosynthesis; L-histidine biosynthesis; L-histidine from 5-phospho-alpha-D-ribose 1-diphosphate: step 3/9.</text>
</comment>
<comment type="subunit">
    <text evidence="1">Homodimer.</text>
</comment>
<comment type="subcellular location">
    <subcellularLocation>
        <location evidence="1">Cytoplasm</location>
    </subcellularLocation>
</comment>
<comment type="similarity">
    <text evidence="1">Belongs to the PRA-CH family.</text>
</comment>
<dbReference type="EC" id="3.5.4.19" evidence="1"/>
<dbReference type="EMBL" id="AY596297">
    <property type="protein sequence ID" value="AAV47327.1"/>
    <property type="molecule type" value="Genomic_DNA"/>
</dbReference>
<dbReference type="RefSeq" id="WP_011224278.1">
    <property type="nucleotide sequence ID" value="NC_006396.1"/>
</dbReference>
<dbReference type="SMR" id="Q5UZH6"/>
<dbReference type="STRING" id="272569.rrnAC2524"/>
<dbReference type="PaxDb" id="272569-rrnAC2524"/>
<dbReference type="EnsemblBacteria" id="AAV47327">
    <property type="protein sequence ID" value="AAV47327"/>
    <property type="gene ID" value="rrnAC2524"/>
</dbReference>
<dbReference type="GeneID" id="40153418"/>
<dbReference type="KEGG" id="hma:rrnAC2524"/>
<dbReference type="PATRIC" id="fig|272569.17.peg.3132"/>
<dbReference type="eggNOG" id="arCOG02676">
    <property type="taxonomic scope" value="Archaea"/>
</dbReference>
<dbReference type="HOGENOM" id="CLU_048577_5_0_2"/>
<dbReference type="UniPathway" id="UPA00031">
    <property type="reaction ID" value="UER00008"/>
</dbReference>
<dbReference type="Proteomes" id="UP000001169">
    <property type="component" value="Chromosome I"/>
</dbReference>
<dbReference type="GO" id="GO:0005737">
    <property type="term" value="C:cytoplasm"/>
    <property type="evidence" value="ECO:0007669"/>
    <property type="project" value="UniProtKB-SubCell"/>
</dbReference>
<dbReference type="GO" id="GO:0000287">
    <property type="term" value="F:magnesium ion binding"/>
    <property type="evidence" value="ECO:0007669"/>
    <property type="project" value="UniProtKB-UniRule"/>
</dbReference>
<dbReference type="GO" id="GO:0004635">
    <property type="term" value="F:phosphoribosyl-AMP cyclohydrolase activity"/>
    <property type="evidence" value="ECO:0007669"/>
    <property type="project" value="UniProtKB-UniRule"/>
</dbReference>
<dbReference type="GO" id="GO:0008270">
    <property type="term" value="F:zinc ion binding"/>
    <property type="evidence" value="ECO:0007669"/>
    <property type="project" value="UniProtKB-UniRule"/>
</dbReference>
<dbReference type="GO" id="GO:0000105">
    <property type="term" value="P:L-histidine biosynthetic process"/>
    <property type="evidence" value="ECO:0007669"/>
    <property type="project" value="UniProtKB-UniRule"/>
</dbReference>
<dbReference type="FunFam" id="3.10.20.810:FF:000001">
    <property type="entry name" value="Histidine biosynthesis bifunctional protein HisIE"/>
    <property type="match status" value="1"/>
</dbReference>
<dbReference type="Gene3D" id="3.10.20.810">
    <property type="entry name" value="Phosphoribosyl-AMP cyclohydrolase"/>
    <property type="match status" value="1"/>
</dbReference>
<dbReference type="HAMAP" id="MF_01021">
    <property type="entry name" value="HisI"/>
    <property type="match status" value="1"/>
</dbReference>
<dbReference type="InterPro" id="IPR026660">
    <property type="entry name" value="PRA-CH"/>
</dbReference>
<dbReference type="InterPro" id="IPR002496">
    <property type="entry name" value="PRib_AMP_CycHydrolase_dom"/>
</dbReference>
<dbReference type="InterPro" id="IPR038019">
    <property type="entry name" value="PRib_AMP_CycHydrolase_sf"/>
</dbReference>
<dbReference type="NCBIfam" id="NF000768">
    <property type="entry name" value="PRK00051.1"/>
    <property type="match status" value="1"/>
</dbReference>
<dbReference type="PANTHER" id="PTHR42945">
    <property type="entry name" value="HISTIDINE BIOSYNTHESIS BIFUNCTIONAL PROTEIN"/>
    <property type="match status" value="1"/>
</dbReference>
<dbReference type="PANTHER" id="PTHR42945:SF1">
    <property type="entry name" value="HISTIDINE BIOSYNTHESIS BIFUNCTIONAL PROTEIN HIS7"/>
    <property type="match status" value="1"/>
</dbReference>
<dbReference type="Pfam" id="PF01502">
    <property type="entry name" value="PRA-CH"/>
    <property type="match status" value="1"/>
</dbReference>
<dbReference type="SUPFAM" id="SSF141734">
    <property type="entry name" value="HisI-like"/>
    <property type="match status" value="1"/>
</dbReference>
<name>HIS3_HALMA</name>
<sequence length="120" mass="13341">MTDVDLAFDEQEYIPAVAQDADSGDVLMLAYVTEEALRKTRETGEAHYYSRSRDELWHKGGTSGHTQAVKEVRVDCDGDALLYIVDQTGGACHTGYESCFHRTVDGETVGEQVFDPDDVY</sequence>
<reference key="1">
    <citation type="journal article" date="2004" name="Genome Res.">
        <title>Genome sequence of Haloarcula marismortui: a halophilic archaeon from the Dead Sea.</title>
        <authorList>
            <person name="Baliga N.S."/>
            <person name="Bonneau R."/>
            <person name="Facciotti M.T."/>
            <person name="Pan M."/>
            <person name="Glusman G."/>
            <person name="Deutsch E.W."/>
            <person name="Shannon P."/>
            <person name="Chiu Y."/>
            <person name="Weng R.S."/>
            <person name="Gan R.R."/>
            <person name="Hung P."/>
            <person name="Date S.V."/>
            <person name="Marcotte E."/>
            <person name="Hood L."/>
            <person name="Ng W.V."/>
        </authorList>
    </citation>
    <scope>NUCLEOTIDE SEQUENCE [LARGE SCALE GENOMIC DNA]</scope>
    <source>
        <strain>ATCC 43049 / DSM 3752 / JCM 8966 / VKM B-1809</strain>
    </source>
</reference>
<accession>Q5UZH6</accession>
<feature type="chain" id="PRO_0000229845" description="Phosphoribosyl-AMP cyclohydrolase">
    <location>
        <begin position="1"/>
        <end position="120"/>
    </location>
</feature>
<feature type="binding site" evidence="1">
    <location>
        <position position="75"/>
    </location>
    <ligand>
        <name>Mg(2+)</name>
        <dbReference type="ChEBI" id="CHEBI:18420"/>
    </ligand>
</feature>
<feature type="binding site" evidence="1">
    <location>
        <position position="76"/>
    </location>
    <ligand>
        <name>Zn(2+)</name>
        <dbReference type="ChEBI" id="CHEBI:29105"/>
        <note>ligand shared between dimeric partners</note>
    </ligand>
</feature>
<feature type="binding site" evidence="1">
    <location>
        <position position="77"/>
    </location>
    <ligand>
        <name>Mg(2+)</name>
        <dbReference type="ChEBI" id="CHEBI:18420"/>
    </ligand>
</feature>
<feature type="binding site" evidence="1">
    <location>
        <position position="79"/>
    </location>
    <ligand>
        <name>Mg(2+)</name>
        <dbReference type="ChEBI" id="CHEBI:18420"/>
    </ligand>
</feature>
<feature type="binding site" evidence="1">
    <location>
        <position position="92"/>
    </location>
    <ligand>
        <name>Zn(2+)</name>
        <dbReference type="ChEBI" id="CHEBI:29105"/>
        <note>ligand shared between dimeric partners</note>
    </ligand>
</feature>
<feature type="binding site" evidence="1">
    <location>
        <position position="99"/>
    </location>
    <ligand>
        <name>Zn(2+)</name>
        <dbReference type="ChEBI" id="CHEBI:29105"/>
        <note>ligand shared between dimeric partners</note>
    </ligand>
</feature>
<evidence type="ECO:0000255" key="1">
    <source>
        <dbReference type="HAMAP-Rule" id="MF_01021"/>
    </source>
</evidence>
<gene>
    <name evidence="1" type="primary">hisI</name>
    <name type="ordered locus">rrnAC2524</name>
</gene>
<proteinExistence type="inferred from homology"/>
<keyword id="KW-0028">Amino-acid biosynthesis</keyword>
<keyword id="KW-0963">Cytoplasm</keyword>
<keyword id="KW-0368">Histidine biosynthesis</keyword>
<keyword id="KW-0378">Hydrolase</keyword>
<keyword id="KW-0460">Magnesium</keyword>
<keyword id="KW-0479">Metal-binding</keyword>
<keyword id="KW-1185">Reference proteome</keyword>
<keyword id="KW-0862">Zinc</keyword>